<feature type="chain" id="PRO_1000057425" description="4-diphosphocytidyl-2-C-methyl-D-erythritol kinase">
    <location>
        <begin position="1"/>
        <end position="288"/>
    </location>
</feature>
<feature type="active site" evidence="1">
    <location>
        <position position="13"/>
    </location>
</feature>
<feature type="active site" evidence="1">
    <location>
        <position position="139"/>
    </location>
</feature>
<feature type="binding site" evidence="1">
    <location>
        <begin position="97"/>
        <end position="107"/>
    </location>
    <ligand>
        <name>ATP</name>
        <dbReference type="ChEBI" id="CHEBI:30616"/>
    </ligand>
</feature>
<organism>
    <name type="scientific">Saccharophagus degradans (strain 2-40 / ATCC 43961 / DSM 17024)</name>
    <dbReference type="NCBI Taxonomy" id="203122"/>
    <lineage>
        <taxon>Bacteria</taxon>
        <taxon>Pseudomonadati</taxon>
        <taxon>Pseudomonadota</taxon>
        <taxon>Gammaproteobacteria</taxon>
        <taxon>Cellvibrionales</taxon>
        <taxon>Cellvibrionaceae</taxon>
        <taxon>Saccharophagus</taxon>
    </lineage>
</organism>
<evidence type="ECO:0000255" key="1">
    <source>
        <dbReference type="HAMAP-Rule" id="MF_00061"/>
    </source>
</evidence>
<keyword id="KW-0067">ATP-binding</keyword>
<keyword id="KW-0414">Isoprene biosynthesis</keyword>
<keyword id="KW-0418">Kinase</keyword>
<keyword id="KW-0547">Nucleotide-binding</keyword>
<keyword id="KW-1185">Reference proteome</keyword>
<keyword id="KW-0808">Transferase</keyword>
<accession>Q21FL9</accession>
<name>ISPE_SACD2</name>
<gene>
    <name evidence="1" type="primary">ispE</name>
    <name type="ordered locus">Sde_3255</name>
</gene>
<sequence length="288" mass="31105">MLQTSLTLPAPAKLNLFLHITGRRPDGYHNLQTVFQLLDFGDELTFTPNQSGEITITPAIEGVPLEQNLVYKAANILRSHVNRPELGATIHLTKRLPMGGGIGGGSSDAATTLVGLNYLWQTGVSPTTLAQLGRQLGADVPVFVEGNSAWAEGIGEQLIALDLPQYWYVVLTPACHVSTVEIFSHKDLTRDTLAITVAAFFEKGGKNDCQPLVERLFPQVRDAVDWLNKFGPAKLTGTGASVFAAFPSKDAAQKVFANKPKHLNGFVAQGVNESPLHQRLPEQCITGV</sequence>
<reference key="1">
    <citation type="journal article" date="2008" name="PLoS Genet.">
        <title>Complete genome sequence of the complex carbohydrate-degrading marine bacterium, Saccharophagus degradans strain 2-40 T.</title>
        <authorList>
            <person name="Weiner R.M."/>
            <person name="Taylor L.E. II"/>
            <person name="Henrissat B."/>
            <person name="Hauser L."/>
            <person name="Land M."/>
            <person name="Coutinho P.M."/>
            <person name="Rancurel C."/>
            <person name="Saunders E.H."/>
            <person name="Longmire A.G."/>
            <person name="Zhang H."/>
            <person name="Bayer E.A."/>
            <person name="Gilbert H.J."/>
            <person name="Larimer F."/>
            <person name="Zhulin I.B."/>
            <person name="Ekborg N.A."/>
            <person name="Lamed R."/>
            <person name="Richardson P.M."/>
            <person name="Borovok I."/>
            <person name="Hutcheson S."/>
        </authorList>
    </citation>
    <scope>NUCLEOTIDE SEQUENCE [LARGE SCALE GENOMIC DNA]</scope>
    <source>
        <strain>2-40 / ATCC 43961 / DSM 17024</strain>
    </source>
</reference>
<dbReference type="EC" id="2.7.1.148" evidence="1"/>
<dbReference type="EMBL" id="CP000282">
    <property type="protein sequence ID" value="ABD82510.1"/>
    <property type="molecule type" value="Genomic_DNA"/>
</dbReference>
<dbReference type="RefSeq" id="WP_011469726.1">
    <property type="nucleotide sequence ID" value="NC_007912.1"/>
</dbReference>
<dbReference type="SMR" id="Q21FL9"/>
<dbReference type="STRING" id="203122.Sde_3255"/>
<dbReference type="GeneID" id="98615763"/>
<dbReference type="KEGG" id="sde:Sde_3255"/>
<dbReference type="eggNOG" id="COG1947">
    <property type="taxonomic scope" value="Bacteria"/>
</dbReference>
<dbReference type="HOGENOM" id="CLU_053057_3_0_6"/>
<dbReference type="OrthoDB" id="9809438at2"/>
<dbReference type="UniPathway" id="UPA00056">
    <property type="reaction ID" value="UER00094"/>
</dbReference>
<dbReference type="Proteomes" id="UP000001947">
    <property type="component" value="Chromosome"/>
</dbReference>
<dbReference type="GO" id="GO:0050515">
    <property type="term" value="F:4-(cytidine 5'-diphospho)-2-C-methyl-D-erythritol kinase activity"/>
    <property type="evidence" value="ECO:0007669"/>
    <property type="project" value="UniProtKB-UniRule"/>
</dbReference>
<dbReference type="GO" id="GO:0005524">
    <property type="term" value="F:ATP binding"/>
    <property type="evidence" value="ECO:0007669"/>
    <property type="project" value="UniProtKB-UniRule"/>
</dbReference>
<dbReference type="GO" id="GO:0019288">
    <property type="term" value="P:isopentenyl diphosphate biosynthetic process, methylerythritol 4-phosphate pathway"/>
    <property type="evidence" value="ECO:0007669"/>
    <property type="project" value="UniProtKB-UniRule"/>
</dbReference>
<dbReference type="GO" id="GO:0016114">
    <property type="term" value="P:terpenoid biosynthetic process"/>
    <property type="evidence" value="ECO:0007669"/>
    <property type="project" value="InterPro"/>
</dbReference>
<dbReference type="Gene3D" id="3.30.230.10">
    <property type="match status" value="1"/>
</dbReference>
<dbReference type="Gene3D" id="3.30.70.890">
    <property type="entry name" value="GHMP kinase, C-terminal domain"/>
    <property type="match status" value="1"/>
</dbReference>
<dbReference type="HAMAP" id="MF_00061">
    <property type="entry name" value="IspE"/>
    <property type="match status" value="1"/>
</dbReference>
<dbReference type="InterPro" id="IPR013750">
    <property type="entry name" value="GHMP_kinase_C_dom"/>
</dbReference>
<dbReference type="InterPro" id="IPR036554">
    <property type="entry name" value="GHMP_kinase_C_sf"/>
</dbReference>
<dbReference type="InterPro" id="IPR006204">
    <property type="entry name" value="GHMP_kinase_N_dom"/>
</dbReference>
<dbReference type="InterPro" id="IPR004424">
    <property type="entry name" value="IspE"/>
</dbReference>
<dbReference type="InterPro" id="IPR020568">
    <property type="entry name" value="Ribosomal_Su5_D2-typ_SF"/>
</dbReference>
<dbReference type="InterPro" id="IPR014721">
    <property type="entry name" value="Ribsml_uS5_D2-typ_fold_subgr"/>
</dbReference>
<dbReference type="NCBIfam" id="TIGR00154">
    <property type="entry name" value="ispE"/>
    <property type="match status" value="1"/>
</dbReference>
<dbReference type="PANTHER" id="PTHR43527">
    <property type="entry name" value="4-DIPHOSPHOCYTIDYL-2-C-METHYL-D-ERYTHRITOL KINASE, CHLOROPLASTIC"/>
    <property type="match status" value="1"/>
</dbReference>
<dbReference type="PANTHER" id="PTHR43527:SF2">
    <property type="entry name" value="4-DIPHOSPHOCYTIDYL-2-C-METHYL-D-ERYTHRITOL KINASE, CHLOROPLASTIC"/>
    <property type="match status" value="1"/>
</dbReference>
<dbReference type="Pfam" id="PF08544">
    <property type="entry name" value="GHMP_kinases_C"/>
    <property type="match status" value="1"/>
</dbReference>
<dbReference type="Pfam" id="PF00288">
    <property type="entry name" value="GHMP_kinases_N"/>
    <property type="match status" value="1"/>
</dbReference>
<dbReference type="PIRSF" id="PIRSF010376">
    <property type="entry name" value="IspE"/>
    <property type="match status" value="1"/>
</dbReference>
<dbReference type="SUPFAM" id="SSF55060">
    <property type="entry name" value="GHMP Kinase, C-terminal domain"/>
    <property type="match status" value="1"/>
</dbReference>
<dbReference type="SUPFAM" id="SSF54211">
    <property type="entry name" value="Ribosomal protein S5 domain 2-like"/>
    <property type="match status" value="1"/>
</dbReference>
<protein>
    <recommendedName>
        <fullName evidence="1">4-diphosphocytidyl-2-C-methyl-D-erythritol kinase</fullName>
        <shortName evidence="1">CMK</shortName>
        <ecNumber evidence="1">2.7.1.148</ecNumber>
    </recommendedName>
    <alternativeName>
        <fullName evidence="1">4-(cytidine-5'-diphospho)-2-C-methyl-D-erythritol kinase</fullName>
    </alternativeName>
</protein>
<comment type="function">
    <text evidence="1">Catalyzes the phosphorylation of the position 2 hydroxy group of 4-diphosphocytidyl-2C-methyl-D-erythritol.</text>
</comment>
<comment type="catalytic activity">
    <reaction evidence="1">
        <text>4-CDP-2-C-methyl-D-erythritol + ATP = 4-CDP-2-C-methyl-D-erythritol 2-phosphate + ADP + H(+)</text>
        <dbReference type="Rhea" id="RHEA:18437"/>
        <dbReference type="ChEBI" id="CHEBI:15378"/>
        <dbReference type="ChEBI" id="CHEBI:30616"/>
        <dbReference type="ChEBI" id="CHEBI:57823"/>
        <dbReference type="ChEBI" id="CHEBI:57919"/>
        <dbReference type="ChEBI" id="CHEBI:456216"/>
        <dbReference type="EC" id="2.7.1.148"/>
    </reaction>
</comment>
<comment type="pathway">
    <text evidence="1">Isoprenoid biosynthesis; isopentenyl diphosphate biosynthesis via DXP pathway; isopentenyl diphosphate from 1-deoxy-D-xylulose 5-phosphate: step 3/6.</text>
</comment>
<comment type="similarity">
    <text evidence="1">Belongs to the GHMP kinase family. IspE subfamily.</text>
</comment>
<proteinExistence type="inferred from homology"/>